<feature type="chain" id="PRO_0000055422" description="Protein-export protein SecB">
    <location>
        <begin position="1"/>
        <end position="154"/>
    </location>
</feature>
<gene>
    <name evidence="1" type="primary">secB</name>
    <name type="ordered locus">VP2831</name>
</gene>
<organism>
    <name type="scientific">Vibrio parahaemolyticus serotype O3:K6 (strain RIMD 2210633)</name>
    <dbReference type="NCBI Taxonomy" id="223926"/>
    <lineage>
        <taxon>Bacteria</taxon>
        <taxon>Pseudomonadati</taxon>
        <taxon>Pseudomonadota</taxon>
        <taxon>Gammaproteobacteria</taxon>
        <taxon>Vibrionales</taxon>
        <taxon>Vibrionaceae</taxon>
        <taxon>Vibrio</taxon>
    </lineage>
</organism>
<accession>Q87KZ3</accession>
<reference key="1">
    <citation type="journal article" date="2003" name="Lancet">
        <title>Genome sequence of Vibrio parahaemolyticus: a pathogenic mechanism distinct from that of V. cholerae.</title>
        <authorList>
            <person name="Makino K."/>
            <person name="Oshima K."/>
            <person name="Kurokawa K."/>
            <person name="Yokoyama K."/>
            <person name="Uda T."/>
            <person name="Tagomori K."/>
            <person name="Iijima Y."/>
            <person name="Najima M."/>
            <person name="Nakano M."/>
            <person name="Yamashita A."/>
            <person name="Kubota Y."/>
            <person name="Kimura S."/>
            <person name="Yasunaga T."/>
            <person name="Honda T."/>
            <person name="Shinagawa H."/>
            <person name="Hattori M."/>
            <person name="Iida T."/>
        </authorList>
    </citation>
    <scope>NUCLEOTIDE SEQUENCE [LARGE SCALE GENOMIC DNA]</scope>
    <source>
        <strain>RIMD 2210633</strain>
    </source>
</reference>
<protein>
    <recommendedName>
        <fullName evidence="1">Protein-export protein SecB</fullName>
    </recommendedName>
</protein>
<comment type="function">
    <text evidence="1">One of the proteins required for the normal export of preproteins out of the cell cytoplasm. It is a molecular chaperone that binds to a subset of precursor proteins, maintaining them in a translocation-competent state. It also specifically binds to its receptor SecA.</text>
</comment>
<comment type="subunit">
    <text evidence="1">Homotetramer, a dimer of dimers. One homotetramer interacts with 1 SecA dimer.</text>
</comment>
<comment type="subcellular location">
    <subcellularLocation>
        <location evidence="1">Cytoplasm</location>
    </subcellularLocation>
</comment>
<comment type="similarity">
    <text evidence="1">Belongs to the SecB family.</text>
</comment>
<dbReference type="EMBL" id="BA000031">
    <property type="protein sequence ID" value="BAC61094.1"/>
    <property type="molecule type" value="Genomic_DNA"/>
</dbReference>
<dbReference type="RefSeq" id="NP_799210.1">
    <property type="nucleotide sequence ID" value="NC_004603.1"/>
</dbReference>
<dbReference type="RefSeq" id="WP_005456911.1">
    <property type="nucleotide sequence ID" value="NC_004603.1"/>
</dbReference>
<dbReference type="SMR" id="Q87KZ3"/>
<dbReference type="GeneID" id="1190394"/>
<dbReference type="KEGG" id="vpa:VP2831"/>
<dbReference type="PATRIC" id="fig|223926.6.peg.2723"/>
<dbReference type="eggNOG" id="COG1952">
    <property type="taxonomic scope" value="Bacteria"/>
</dbReference>
<dbReference type="HOGENOM" id="CLU_111574_1_0_6"/>
<dbReference type="Proteomes" id="UP000002493">
    <property type="component" value="Chromosome 1"/>
</dbReference>
<dbReference type="GO" id="GO:0005737">
    <property type="term" value="C:cytoplasm"/>
    <property type="evidence" value="ECO:0007669"/>
    <property type="project" value="UniProtKB-SubCell"/>
</dbReference>
<dbReference type="GO" id="GO:0051082">
    <property type="term" value="F:unfolded protein binding"/>
    <property type="evidence" value="ECO:0007669"/>
    <property type="project" value="InterPro"/>
</dbReference>
<dbReference type="GO" id="GO:0006457">
    <property type="term" value="P:protein folding"/>
    <property type="evidence" value="ECO:0007669"/>
    <property type="project" value="UniProtKB-UniRule"/>
</dbReference>
<dbReference type="GO" id="GO:0051262">
    <property type="term" value="P:protein tetramerization"/>
    <property type="evidence" value="ECO:0007669"/>
    <property type="project" value="InterPro"/>
</dbReference>
<dbReference type="GO" id="GO:0015031">
    <property type="term" value="P:protein transport"/>
    <property type="evidence" value="ECO:0007669"/>
    <property type="project" value="UniProtKB-UniRule"/>
</dbReference>
<dbReference type="Gene3D" id="3.10.420.10">
    <property type="entry name" value="SecB-like"/>
    <property type="match status" value="1"/>
</dbReference>
<dbReference type="HAMAP" id="MF_00821">
    <property type="entry name" value="SecB"/>
    <property type="match status" value="1"/>
</dbReference>
<dbReference type="InterPro" id="IPR003708">
    <property type="entry name" value="SecB"/>
</dbReference>
<dbReference type="InterPro" id="IPR035958">
    <property type="entry name" value="SecB-like_sf"/>
</dbReference>
<dbReference type="NCBIfam" id="NF004393">
    <property type="entry name" value="PRK05751.1-4"/>
    <property type="match status" value="1"/>
</dbReference>
<dbReference type="NCBIfam" id="TIGR00809">
    <property type="entry name" value="secB"/>
    <property type="match status" value="1"/>
</dbReference>
<dbReference type="PANTHER" id="PTHR36918">
    <property type="match status" value="1"/>
</dbReference>
<dbReference type="PANTHER" id="PTHR36918:SF1">
    <property type="entry name" value="PROTEIN-EXPORT PROTEIN SECB"/>
    <property type="match status" value="1"/>
</dbReference>
<dbReference type="Pfam" id="PF02556">
    <property type="entry name" value="SecB"/>
    <property type="match status" value="1"/>
</dbReference>
<dbReference type="PRINTS" id="PR01594">
    <property type="entry name" value="SECBCHAPRONE"/>
</dbReference>
<dbReference type="SUPFAM" id="SSF54611">
    <property type="entry name" value="SecB-like"/>
    <property type="match status" value="1"/>
</dbReference>
<keyword id="KW-0143">Chaperone</keyword>
<keyword id="KW-0963">Cytoplasm</keyword>
<keyword id="KW-0653">Protein transport</keyword>
<keyword id="KW-0811">Translocation</keyword>
<keyword id="KW-0813">Transport</keyword>
<evidence type="ECO:0000255" key="1">
    <source>
        <dbReference type="HAMAP-Rule" id="MF_00821"/>
    </source>
</evidence>
<proteinExistence type="inferred from homology"/>
<sequence length="154" mass="17172">MAEAAPQEAQQNFAIQRIFLKDVSFEAPNSPVIFQKEWNPDVKLDLDTQSRELGEGVYEVVLRLTVTVKNEEETAFLCEVQQGGIFTAEQMEAGQLAHCLGAFCPNILFPYARETISSLVVKGTFPQLNLAPVNFDALFMNYLQQQAQQGEAQA</sequence>
<name>SECB_VIBPA</name>